<protein>
    <recommendedName>
        <fullName evidence="1">Phenylalanine--tRNA ligase alpha subunit</fullName>
        <ecNumber evidence="1">6.1.1.20</ecNumber>
    </recommendedName>
    <alternativeName>
        <fullName evidence="1">Phenylalanyl-tRNA synthetase alpha subunit</fullName>
        <shortName evidence="1">PheRS</shortName>
    </alternativeName>
</protein>
<gene>
    <name evidence="1" type="primary">pheS</name>
    <name type="ordered locus">PSPA7_2508</name>
</gene>
<feature type="chain" id="PRO_1000006873" description="Phenylalanine--tRNA ligase alpha subunit">
    <location>
        <begin position="1"/>
        <end position="338"/>
    </location>
</feature>
<feature type="binding site" evidence="1">
    <location>
        <position position="252"/>
    </location>
    <ligand>
        <name>Mg(2+)</name>
        <dbReference type="ChEBI" id="CHEBI:18420"/>
        <note>shared with beta subunit</note>
    </ligand>
</feature>
<dbReference type="EC" id="6.1.1.20" evidence="1"/>
<dbReference type="EMBL" id="CP000744">
    <property type="protein sequence ID" value="ABR86280.1"/>
    <property type="molecule type" value="Genomic_DNA"/>
</dbReference>
<dbReference type="RefSeq" id="WP_012075399.1">
    <property type="nucleotide sequence ID" value="NC_009656.1"/>
</dbReference>
<dbReference type="SMR" id="A6V489"/>
<dbReference type="GeneID" id="77220771"/>
<dbReference type="KEGG" id="pap:PSPA7_2508"/>
<dbReference type="HOGENOM" id="CLU_025086_0_1_6"/>
<dbReference type="Proteomes" id="UP000001582">
    <property type="component" value="Chromosome"/>
</dbReference>
<dbReference type="GO" id="GO:0005737">
    <property type="term" value="C:cytoplasm"/>
    <property type="evidence" value="ECO:0007669"/>
    <property type="project" value="UniProtKB-SubCell"/>
</dbReference>
<dbReference type="GO" id="GO:0005524">
    <property type="term" value="F:ATP binding"/>
    <property type="evidence" value="ECO:0007669"/>
    <property type="project" value="UniProtKB-UniRule"/>
</dbReference>
<dbReference type="GO" id="GO:0000287">
    <property type="term" value="F:magnesium ion binding"/>
    <property type="evidence" value="ECO:0007669"/>
    <property type="project" value="UniProtKB-UniRule"/>
</dbReference>
<dbReference type="GO" id="GO:0004826">
    <property type="term" value="F:phenylalanine-tRNA ligase activity"/>
    <property type="evidence" value="ECO:0007669"/>
    <property type="project" value="UniProtKB-UniRule"/>
</dbReference>
<dbReference type="GO" id="GO:0000049">
    <property type="term" value="F:tRNA binding"/>
    <property type="evidence" value="ECO:0007669"/>
    <property type="project" value="InterPro"/>
</dbReference>
<dbReference type="GO" id="GO:0006432">
    <property type="term" value="P:phenylalanyl-tRNA aminoacylation"/>
    <property type="evidence" value="ECO:0007669"/>
    <property type="project" value="UniProtKB-UniRule"/>
</dbReference>
<dbReference type="CDD" id="cd00496">
    <property type="entry name" value="PheRS_alpha_core"/>
    <property type="match status" value="1"/>
</dbReference>
<dbReference type="FunFam" id="3.30.930.10:FF:000003">
    <property type="entry name" value="Phenylalanine--tRNA ligase alpha subunit"/>
    <property type="match status" value="1"/>
</dbReference>
<dbReference type="Gene3D" id="3.30.930.10">
    <property type="entry name" value="Bira Bifunctional Protein, Domain 2"/>
    <property type="match status" value="1"/>
</dbReference>
<dbReference type="HAMAP" id="MF_00281">
    <property type="entry name" value="Phe_tRNA_synth_alpha1"/>
    <property type="match status" value="1"/>
</dbReference>
<dbReference type="InterPro" id="IPR006195">
    <property type="entry name" value="aa-tRNA-synth_II"/>
</dbReference>
<dbReference type="InterPro" id="IPR045864">
    <property type="entry name" value="aa-tRNA-synth_II/BPL/LPL"/>
</dbReference>
<dbReference type="InterPro" id="IPR004529">
    <property type="entry name" value="Phe-tRNA-synth_IIc_asu"/>
</dbReference>
<dbReference type="InterPro" id="IPR004188">
    <property type="entry name" value="Phe-tRNA_ligase_II_N"/>
</dbReference>
<dbReference type="InterPro" id="IPR022911">
    <property type="entry name" value="Phe_tRNA_ligase_alpha1_bac"/>
</dbReference>
<dbReference type="InterPro" id="IPR002319">
    <property type="entry name" value="Phenylalanyl-tRNA_Synthase"/>
</dbReference>
<dbReference type="InterPro" id="IPR010978">
    <property type="entry name" value="tRNA-bd_arm"/>
</dbReference>
<dbReference type="NCBIfam" id="TIGR00468">
    <property type="entry name" value="pheS"/>
    <property type="match status" value="1"/>
</dbReference>
<dbReference type="PANTHER" id="PTHR11538:SF41">
    <property type="entry name" value="PHENYLALANINE--TRNA LIGASE, MITOCHONDRIAL"/>
    <property type="match status" value="1"/>
</dbReference>
<dbReference type="PANTHER" id="PTHR11538">
    <property type="entry name" value="PHENYLALANYL-TRNA SYNTHETASE"/>
    <property type="match status" value="1"/>
</dbReference>
<dbReference type="Pfam" id="PF02912">
    <property type="entry name" value="Phe_tRNA-synt_N"/>
    <property type="match status" value="1"/>
</dbReference>
<dbReference type="Pfam" id="PF01409">
    <property type="entry name" value="tRNA-synt_2d"/>
    <property type="match status" value="1"/>
</dbReference>
<dbReference type="SUPFAM" id="SSF55681">
    <property type="entry name" value="Class II aaRS and biotin synthetases"/>
    <property type="match status" value="1"/>
</dbReference>
<dbReference type="SUPFAM" id="SSF46589">
    <property type="entry name" value="tRNA-binding arm"/>
    <property type="match status" value="1"/>
</dbReference>
<dbReference type="PROSITE" id="PS50862">
    <property type="entry name" value="AA_TRNA_LIGASE_II"/>
    <property type="match status" value="1"/>
</dbReference>
<accession>A6V489</accession>
<keyword id="KW-0030">Aminoacyl-tRNA synthetase</keyword>
<keyword id="KW-0067">ATP-binding</keyword>
<keyword id="KW-0963">Cytoplasm</keyword>
<keyword id="KW-0436">Ligase</keyword>
<keyword id="KW-0460">Magnesium</keyword>
<keyword id="KW-0479">Metal-binding</keyword>
<keyword id="KW-0547">Nucleotide-binding</keyword>
<keyword id="KW-0648">Protein biosynthesis</keyword>
<comment type="catalytic activity">
    <reaction evidence="1">
        <text>tRNA(Phe) + L-phenylalanine + ATP = L-phenylalanyl-tRNA(Phe) + AMP + diphosphate + H(+)</text>
        <dbReference type="Rhea" id="RHEA:19413"/>
        <dbReference type="Rhea" id="RHEA-COMP:9668"/>
        <dbReference type="Rhea" id="RHEA-COMP:9699"/>
        <dbReference type="ChEBI" id="CHEBI:15378"/>
        <dbReference type="ChEBI" id="CHEBI:30616"/>
        <dbReference type="ChEBI" id="CHEBI:33019"/>
        <dbReference type="ChEBI" id="CHEBI:58095"/>
        <dbReference type="ChEBI" id="CHEBI:78442"/>
        <dbReference type="ChEBI" id="CHEBI:78531"/>
        <dbReference type="ChEBI" id="CHEBI:456215"/>
        <dbReference type="EC" id="6.1.1.20"/>
    </reaction>
</comment>
<comment type="cofactor">
    <cofactor evidence="1">
        <name>Mg(2+)</name>
        <dbReference type="ChEBI" id="CHEBI:18420"/>
    </cofactor>
    <text evidence="1">Binds 2 magnesium ions per tetramer.</text>
</comment>
<comment type="subunit">
    <text evidence="1">Tetramer of two alpha and two beta subunits.</text>
</comment>
<comment type="subcellular location">
    <subcellularLocation>
        <location evidence="1">Cytoplasm</location>
    </subcellularLocation>
</comment>
<comment type="similarity">
    <text evidence="1">Belongs to the class-II aminoacyl-tRNA synthetase family. Phe-tRNA synthetase alpha subunit type 1 subfamily.</text>
</comment>
<evidence type="ECO:0000255" key="1">
    <source>
        <dbReference type="HAMAP-Rule" id="MF_00281"/>
    </source>
</evidence>
<sequence>MENLDALVSQALEAVRHTEDVNALEQIRVHYLGKKGELTQVMKTLGDLPAEERPKVGALINVAKEKVQDALNVRKTELEGAALAARLAAERIDVTLPGRGQPSGGLHPVTRTLERIEQCFSRIGYEVAEGPEVEDDYHNFEALNIPGHHPARAMHDTFYFNANMLLRTHTSPVQVRTMESQQPPIRIVCPGRVYRCDSDLTHSPMFHQVEGLLVDEGVSFADLKGTIEEFLRAFFEKQLEVRFRPSFFPFTEPSAEVDIQCVICSGNGCRVCKQTGWLEVMGCGMVHPNVLRMSNIDPEKFQGFAFGMGAERLAMLRYGVNDLRLFFDNDLRFLGQFR</sequence>
<organism>
    <name type="scientific">Pseudomonas paraeruginosa (strain DSM 24068 / PA7)</name>
    <name type="common">Pseudomonas aeruginosa (strain PA7)</name>
    <dbReference type="NCBI Taxonomy" id="381754"/>
    <lineage>
        <taxon>Bacteria</taxon>
        <taxon>Pseudomonadati</taxon>
        <taxon>Pseudomonadota</taxon>
        <taxon>Gammaproteobacteria</taxon>
        <taxon>Pseudomonadales</taxon>
        <taxon>Pseudomonadaceae</taxon>
        <taxon>Pseudomonas</taxon>
        <taxon>Pseudomonas paraeruginosa</taxon>
    </lineage>
</organism>
<reference key="1">
    <citation type="submission" date="2007-06" db="EMBL/GenBank/DDBJ databases">
        <authorList>
            <person name="Dodson R.J."/>
            <person name="Harkins D."/>
            <person name="Paulsen I.T."/>
        </authorList>
    </citation>
    <scope>NUCLEOTIDE SEQUENCE [LARGE SCALE GENOMIC DNA]</scope>
    <source>
        <strain>DSM 24068 / PA7</strain>
    </source>
</reference>
<proteinExistence type="inferred from homology"/>
<name>SYFA_PSEP7</name>